<sequence length="439" mass="48089">MTEKVTVIGAGLAGSEAAWQLAKRGIKVDLYEMRPKKMTPAHESGNFAELVCTNSMRSNQLSNAVGLLKEEMRQMDSLIMQAADACQVPAGGALAVDRELFSRYVTDKLTSLPEVIIHDEEITDLPSEGITVIATGPLTSDSLAEKIQDFEGAESLHFFDAAAPIIAADSIDMDIVYKKSRYDRGEAAYLNCPMTKEEYDRFANALVHAETAEIHGFENSEVFEGCMPIEVMAARGAKTLLFGPLKPVGLENPKDGKTPYAVVQLRQDNAAASMYNIVGFQTHLKYGEQKRVFQMIPGLENARFVRYGKMHRNTYMASPEVLKASYEAKKRPGLFFAGQMTGVEGYVESAGSGLVAGINAAREALGQETVEFPVTTALGSMAHYITTTDAKHFQPMNASFALIPGLEGKKIRNKRERHEKISERGLADLAAFKAEKLDD</sequence>
<reference key="1">
    <citation type="journal article" date="2006" name="Proc. Natl. Acad. Sci. U.S.A.">
        <title>Comparative genomics of the lactic acid bacteria.</title>
        <authorList>
            <person name="Makarova K.S."/>
            <person name="Slesarev A."/>
            <person name="Wolf Y.I."/>
            <person name="Sorokin A."/>
            <person name="Mirkin B."/>
            <person name="Koonin E.V."/>
            <person name="Pavlov A."/>
            <person name="Pavlova N."/>
            <person name="Karamychev V."/>
            <person name="Polouchine N."/>
            <person name="Shakhova V."/>
            <person name="Grigoriev I."/>
            <person name="Lou Y."/>
            <person name="Rohksar D."/>
            <person name="Lucas S."/>
            <person name="Huang K."/>
            <person name="Goodstein D.M."/>
            <person name="Hawkins T."/>
            <person name="Plengvidhya V."/>
            <person name="Welker D."/>
            <person name="Hughes J."/>
            <person name="Goh Y."/>
            <person name="Benson A."/>
            <person name="Baldwin K."/>
            <person name="Lee J.-H."/>
            <person name="Diaz-Muniz I."/>
            <person name="Dosti B."/>
            <person name="Smeianov V."/>
            <person name="Wechter W."/>
            <person name="Barabote R."/>
            <person name="Lorca G."/>
            <person name="Altermann E."/>
            <person name="Barrangou R."/>
            <person name="Ganesan B."/>
            <person name="Xie Y."/>
            <person name="Rawsthorne H."/>
            <person name="Tamir D."/>
            <person name="Parker C."/>
            <person name="Breidt F."/>
            <person name="Broadbent J.R."/>
            <person name="Hutkins R."/>
            <person name="O'Sullivan D."/>
            <person name="Steele J."/>
            <person name="Unlu G."/>
            <person name="Saier M.H. Jr."/>
            <person name="Klaenhammer T."/>
            <person name="Richardson P."/>
            <person name="Kozyavkin S."/>
            <person name="Weimer B.C."/>
            <person name="Mills D.A."/>
        </authorList>
    </citation>
    <scope>NUCLEOTIDE SEQUENCE [LARGE SCALE GENOMIC DNA]</scope>
    <source>
        <strain>ATCC BAA-365 / Lb-18</strain>
    </source>
</reference>
<dbReference type="EC" id="2.1.1.74" evidence="1"/>
<dbReference type="EMBL" id="CP000412">
    <property type="protein sequence ID" value="ABJ58720.1"/>
    <property type="molecule type" value="Genomic_DNA"/>
</dbReference>
<dbReference type="RefSeq" id="WP_011678372.1">
    <property type="nucleotide sequence ID" value="NC_008529.1"/>
</dbReference>
<dbReference type="SMR" id="Q04A02"/>
<dbReference type="KEGG" id="lbu:LBUL_1189"/>
<dbReference type="HOGENOM" id="CLU_033057_1_0_9"/>
<dbReference type="BioCyc" id="LDEL321956:LBUL_RS05550-MONOMER"/>
<dbReference type="GO" id="GO:0005829">
    <property type="term" value="C:cytosol"/>
    <property type="evidence" value="ECO:0007669"/>
    <property type="project" value="TreeGrafter"/>
</dbReference>
<dbReference type="GO" id="GO:0050660">
    <property type="term" value="F:flavin adenine dinucleotide binding"/>
    <property type="evidence" value="ECO:0007669"/>
    <property type="project" value="UniProtKB-UniRule"/>
</dbReference>
<dbReference type="GO" id="GO:0047151">
    <property type="term" value="F:tRNA (uracil(54)-C5)-methyltransferase activity, 5,10-methylenetetrahydrofolate-dependent"/>
    <property type="evidence" value="ECO:0007669"/>
    <property type="project" value="UniProtKB-UniRule"/>
</dbReference>
<dbReference type="GO" id="GO:0030488">
    <property type="term" value="P:tRNA methylation"/>
    <property type="evidence" value="ECO:0007669"/>
    <property type="project" value="TreeGrafter"/>
</dbReference>
<dbReference type="GO" id="GO:0002098">
    <property type="term" value="P:tRNA wobble uridine modification"/>
    <property type="evidence" value="ECO:0007669"/>
    <property type="project" value="TreeGrafter"/>
</dbReference>
<dbReference type="FunFam" id="3.50.50.60:FF:000035">
    <property type="entry name" value="Methylenetetrahydrofolate--tRNA-(uracil-5-)-methyltransferase TrmFO"/>
    <property type="match status" value="1"/>
</dbReference>
<dbReference type="FunFam" id="3.50.50.60:FF:000040">
    <property type="entry name" value="Methylenetetrahydrofolate--tRNA-(uracil-5-)-methyltransferase TrmFO"/>
    <property type="match status" value="1"/>
</dbReference>
<dbReference type="Gene3D" id="3.50.50.60">
    <property type="entry name" value="FAD/NAD(P)-binding domain"/>
    <property type="match status" value="2"/>
</dbReference>
<dbReference type="HAMAP" id="MF_01037">
    <property type="entry name" value="TrmFO"/>
    <property type="match status" value="1"/>
</dbReference>
<dbReference type="InterPro" id="IPR036188">
    <property type="entry name" value="FAD/NAD-bd_sf"/>
</dbReference>
<dbReference type="InterPro" id="IPR002218">
    <property type="entry name" value="MnmG-rel"/>
</dbReference>
<dbReference type="InterPro" id="IPR020595">
    <property type="entry name" value="MnmG-rel_CS"/>
</dbReference>
<dbReference type="InterPro" id="IPR040131">
    <property type="entry name" value="MnmG_N"/>
</dbReference>
<dbReference type="InterPro" id="IPR004417">
    <property type="entry name" value="TrmFO"/>
</dbReference>
<dbReference type="NCBIfam" id="TIGR00137">
    <property type="entry name" value="gid_trmFO"/>
    <property type="match status" value="1"/>
</dbReference>
<dbReference type="NCBIfam" id="NF003739">
    <property type="entry name" value="PRK05335.1"/>
    <property type="match status" value="1"/>
</dbReference>
<dbReference type="PANTHER" id="PTHR11806">
    <property type="entry name" value="GLUCOSE INHIBITED DIVISION PROTEIN A"/>
    <property type="match status" value="1"/>
</dbReference>
<dbReference type="PANTHER" id="PTHR11806:SF2">
    <property type="entry name" value="METHYLENETETRAHYDROFOLATE--TRNA-(URACIL-5-)-METHYLTRANSFERASE TRMFO"/>
    <property type="match status" value="1"/>
</dbReference>
<dbReference type="Pfam" id="PF01134">
    <property type="entry name" value="GIDA"/>
    <property type="match status" value="1"/>
</dbReference>
<dbReference type="SUPFAM" id="SSF51905">
    <property type="entry name" value="FAD/NAD(P)-binding domain"/>
    <property type="match status" value="1"/>
</dbReference>
<dbReference type="PROSITE" id="PS01281">
    <property type="entry name" value="GIDA_2"/>
    <property type="match status" value="1"/>
</dbReference>
<protein>
    <recommendedName>
        <fullName evidence="1">Methylenetetrahydrofolate--tRNA-(uracil-5-)-methyltransferase TrmFO</fullName>
        <ecNumber evidence="1">2.1.1.74</ecNumber>
    </recommendedName>
    <alternativeName>
        <fullName evidence="1">Folate-dependent tRNA (uracil-5-)-methyltransferase</fullName>
    </alternativeName>
    <alternativeName>
        <fullName evidence="1">Folate-dependent tRNA(M-5-U54)-methyltransferase</fullName>
    </alternativeName>
</protein>
<proteinExistence type="inferred from homology"/>
<name>TRMFO_LACDB</name>
<gene>
    <name evidence="1" type="primary">trmFO</name>
    <name type="synonym">gid</name>
    <name type="ordered locus">LBUL_1189</name>
</gene>
<comment type="function">
    <text evidence="1">Catalyzes the folate-dependent formation of 5-methyl-uridine at position 54 (M-5-U54) in all tRNAs.</text>
</comment>
<comment type="catalytic activity">
    <reaction evidence="1">
        <text>uridine(54) in tRNA + (6R)-5,10-methylene-5,6,7,8-tetrahydrofolate + NADH + H(+) = 5-methyluridine(54) in tRNA + (6S)-5,6,7,8-tetrahydrofolate + NAD(+)</text>
        <dbReference type="Rhea" id="RHEA:16873"/>
        <dbReference type="Rhea" id="RHEA-COMP:10167"/>
        <dbReference type="Rhea" id="RHEA-COMP:10193"/>
        <dbReference type="ChEBI" id="CHEBI:15378"/>
        <dbReference type="ChEBI" id="CHEBI:15636"/>
        <dbReference type="ChEBI" id="CHEBI:57453"/>
        <dbReference type="ChEBI" id="CHEBI:57540"/>
        <dbReference type="ChEBI" id="CHEBI:57945"/>
        <dbReference type="ChEBI" id="CHEBI:65315"/>
        <dbReference type="ChEBI" id="CHEBI:74447"/>
        <dbReference type="EC" id="2.1.1.74"/>
    </reaction>
</comment>
<comment type="catalytic activity">
    <reaction evidence="1">
        <text>uridine(54) in tRNA + (6R)-5,10-methylene-5,6,7,8-tetrahydrofolate + NADPH + H(+) = 5-methyluridine(54) in tRNA + (6S)-5,6,7,8-tetrahydrofolate + NADP(+)</text>
        <dbReference type="Rhea" id="RHEA:62372"/>
        <dbReference type="Rhea" id="RHEA-COMP:10167"/>
        <dbReference type="Rhea" id="RHEA-COMP:10193"/>
        <dbReference type="ChEBI" id="CHEBI:15378"/>
        <dbReference type="ChEBI" id="CHEBI:15636"/>
        <dbReference type="ChEBI" id="CHEBI:57453"/>
        <dbReference type="ChEBI" id="CHEBI:57783"/>
        <dbReference type="ChEBI" id="CHEBI:58349"/>
        <dbReference type="ChEBI" id="CHEBI:65315"/>
        <dbReference type="ChEBI" id="CHEBI:74447"/>
        <dbReference type="EC" id="2.1.1.74"/>
    </reaction>
</comment>
<comment type="cofactor">
    <cofactor evidence="1">
        <name>FAD</name>
        <dbReference type="ChEBI" id="CHEBI:57692"/>
    </cofactor>
</comment>
<comment type="subcellular location">
    <subcellularLocation>
        <location evidence="1">Cytoplasm</location>
    </subcellularLocation>
</comment>
<comment type="similarity">
    <text evidence="1">Belongs to the MnmG family. TrmFO subfamily.</text>
</comment>
<keyword id="KW-0963">Cytoplasm</keyword>
<keyword id="KW-0274">FAD</keyword>
<keyword id="KW-0285">Flavoprotein</keyword>
<keyword id="KW-0489">Methyltransferase</keyword>
<keyword id="KW-0520">NAD</keyword>
<keyword id="KW-0521">NADP</keyword>
<keyword id="KW-0808">Transferase</keyword>
<keyword id="KW-0819">tRNA processing</keyword>
<accession>Q04A02</accession>
<evidence type="ECO:0000255" key="1">
    <source>
        <dbReference type="HAMAP-Rule" id="MF_01037"/>
    </source>
</evidence>
<organism>
    <name type="scientific">Lactobacillus delbrueckii subsp. bulgaricus (strain ATCC BAA-365 / Lb-18)</name>
    <dbReference type="NCBI Taxonomy" id="321956"/>
    <lineage>
        <taxon>Bacteria</taxon>
        <taxon>Bacillati</taxon>
        <taxon>Bacillota</taxon>
        <taxon>Bacilli</taxon>
        <taxon>Lactobacillales</taxon>
        <taxon>Lactobacillaceae</taxon>
        <taxon>Lactobacillus</taxon>
    </lineage>
</organism>
<feature type="chain" id="PRO_1000063916" description="Methylenetetrahydrofolate--tRNA-(uracil-5-)-methyltransferase TrmFO">
    <location>
        <begin position="1"/>
        <end position="439"/>
    </location>
</feature>
<feature type="binding site" evidence="1">
    <location>
        <begin position="9"/>
        <end position="14"/>
    </location>
    <ligand>
        <name>FAD</name>
        <dbReference type="ChEBI" id="CHEBI:57692"/>
    </ligand>
</feature>